<feature type="chain" id="PRO_0000122043" description="Serine--tRNA ligase">
    <location>
        <begin position="1"/>
        <end position="424"/>
    </location>
</feature>
<feature type="binding site" evidence="1">
    <location>
        <begin position="230"/>
        <end position="232"/>
    </location>
    <ligand>
        <name>L-serine</name>
        <dbReference type="ChEBI" id="CHEBI:33384"/>
    </ligand>
</feature>
<feature type="binding site" evidence="1">
    <location>
        <begin position="261"/>
        <end position="263"/>
    </location>
    <ligand>
        <name>ATP</name>
        <dbReference type="ChEBI" id="CHEBI:30616"/>
    </ligand>
</feature>
<feature type="binding site" evidence="1">
    <location>
        <position position="284"/>
    </location>
    <ligand>
        <name>L-serine</name>
        <dbReference type="ChEBI" id="CHEBI:33384"/>
    </ligand>
</feature>
<feature type="binding site" evidence="1">
    <location>
        <begin position="348"/>
        <end position="351"/>
    </location>
    <ligand>
        <name>ATP</name>
        <dbReference type="ChEBI" id="CHEBI:30616"/>
    </ligand>
</feature>
<feature type="binding site" evidence="1">
    <location>
        <position position="384"/>
    </location>
    <ligand>
        <name>L-serine</name>
        <dbReference type="ChEBI" id="CHEBI:33384"/>
    </ligand>
</feature>
<dbReference type="EC" id="6.1.1.11" evidence="1"/>
<dbReference type="EMBL" id="AE017285">
    <property type="protein sequence ID" value="AAS94721.1"/>
    <property type="molecule type" value="Genomic_DNA"/>
</dbReference>
<dbReference type="RefSeq" id="WP_010937547.1">
    <property type="nucleotide sequence ID" value="NC_002937.3"/>
</dbReference>
<dbReference type="RefSeq" id="YP_009462.1">
    <property type="nucleotide sequence ID" value="NC_002937.3"/>
</dbReference>
<dbReference type="SMR" id="Q72FH6"/>
<dbReference type="STRING" id="882.DVU_0237"/>
<dbReference type="PaxDb" id="882-DVU_0237"/>
<dbReference type="EnsemblBacteria" id="AAS94721">
    <property type="protein sequence ID" value="AAS94721"/>
    <property type="gene ID" value="DVU_0237"/>
</dbReference>
<dbReference type="KEGG" id="dvu:DVU_0237"/>
<dbReference type="PATRIC" id="fig|882.5.peg.225"/>
<dbReference type="eggNOG" id="COG0172">
    <property type="taxonomic scope" value="Bacteria"/>
</dbReference>
<dbReference type="HOGENOM" id="CLU_023797_1_1_7"/>
<dbReference type="OrthoDB" id="9804647at2"/>
<dbReference type="PhylomeDB" id="Q72FH6"/>
<dbReference type="UniPathway" id="UPA00906">
    <property type="reaction ID" value="UER00895"/>
</dbReference>
<dbReference type="Proteomes" id="UP000002194">
    <property type="component" value="Chromosome"/>
</dbReference>
<dbReference type="GO" id="GO:0005737">
    <property type="term" value="C:cytoplasm"/>
    <property type="evidence" value="ECO:0007669"/>
    <property type="project" value="UniProtKB-SubCell"/>
</dbReference>
<dbReference type="GO" id="GO:0005524">
    <property type="term" value="F:ATP binding"/>
    <property type="evidence" value="ECO:0007669"/>
    <property type="project" value="UniProtKB-UniRule"/>
</dbReference>
<dbReference type="GO" id="GO:0004828">
    <property type="term" value="F:serine-tRNA ligase activity"/>
    <property type="evidence" value="ECO:0007669"/>
    <property type="project" value="UniProtKB-UniRule"/>
</dbReference>
<dbReference type="GO" id="GO:0016260">
    <property type="term" value="P:selenocysteine biosynthetic process"/>
    <property type="evidence" value="ECO:0007669"/>
    <property type="project" value="UniProtKB-UniRule"/>
</dbReference>
<dbReference type="GO" id="GO:0006434">
    <property type="term" value="P:seryl-tRNA aminoacylation"/>
    <property type="evidence" value="ECO:0007669"/>
    <property type="project" value="UniProtKB-UniRule"/>
</dbReference>
<dbReference type="CDD" id="cd00770">
    <property type="entry name" value="SerRS_core"/>
    <property type="match status" value="1"/>
</dbReference>
<dbReference type="Gene3D" id="3.30.930.10">
    <property type="entry name" value="Bira Bifunctional Protein, Domain 2"/>
    <property type="match status" value="1"/>
</dbReference>
<dbReference type="Gene3D" id="1.10.287.40">
    <property type="entry name" value="Serine-tRNA synthetase, tRNA binding domain"/>
    <property type="match status" value="1"/>
</dbReference>
<dbReference type="HAMAP" id="MF_00176">
    <property type="entry name" value="Ser_tRNA_synth_type1"/>
    <property type="match status" value="1"/>
</dbReference>
<dbReference type="InterPro" id="IPR002314">
    <property type="entry name" value="aa-tRNA-synt_IIb"/>
</dbReference>
<dbReference type="InterPro" id="IPR006195">
    <property type="entry name" value="aa-tRNA-synth_II"/>
</dbReference>
<dbReference type="InterPro" id="IPR045864">
    <property type="entry name" value="aa-tRNA-synth_II/BPL/LPL"/>
</dbReference>
<dbReference type="InterPro" id="IPR002317">
    <property type="entry name" value="Ser-tRNA-ligase_type_1"/>
</dbReference>
<dbReference type="InterPro" id="IPR015866">
    <property type="entry name" value="Ser-tRNA-synth_1_N"/>
</dbReference>
<dbReference type="InterPro" id="IPR042103">
    <property type="entry name" value="SerRS_1_N_sf"/>
</dbReference>
<dbReference type="InterPro" id="IPR033729">
    <property type="entry name" value="SerRS_core"/>
</dbReference>
<dbReference type="InterPro" id="IPR010978">
    <property type="entry name" value="tRNA-bd_arm"/>
</dbReference>
<dbReference type="NCBIfam" id="TIGR00414">
    <property type="entry name" value="serS"/>
    <property type="match status" value="1"/>
</dbReference>
<dbReference type="PANTHER" id="PTHR43697:SF1">
    <property type="entry name" value="SERINE--TRNA LIGASE"/>
    <property type="match status" value="1"/>
</dbReference>
<dbReference type="PANTHER" id="PTHR43697">
    <property type="entry name" value="SERYL-TRNA SYNTHETASE"/>
    <property type="match status" value="1"/>
</dbReference>
<dbReference type="Pfam" id="PF02403">
    <property type="entry name" value="Seryl_tRNA_N"/>
    <property type="match status" value="1"/>
</dbReference>
<dbReference type="Pfam" id="PF00587">
    <property type="entry name" value="tRNA-synt_2b"/>
    <property type="match status" value="1"/>
</dbReference>
<dbReference type="PIRSF" id="PIRSF001529">
    <property type="entry name" value="Ser-tRNA-synth_IIa"/>
    <property type="match status" value="1"/>
</dbReference>
<dbReference type="PRINTS" id="PR00981">
    <property type="entry name" value="TRNASYNTHSER"/>
</dbReference>
<dbReference type="SUPFAM" id="SSF55681">
    <property type="entry name" value="Class II aaRS and biotin synthetases"/>
    <property type="match status" value="1"/>
</dbReference>
<dbReference type="SUPFAM" id="SSF46589">
    <property type="entry name" value="tRNA-binding arm"/>
    <property type="match status" value="1"/>
</dbReference>
<dbReference type="PROSITE" id="PS50862">
    <property type="entry name" value="AA_TRNA_LIGASE_II"/>
    <property type="match status" value="1"/>
</dbReference>
<accession>Q72FH6</accession>
<proteinExistence type="inferred from homology"/>
<evidence type="ECO:0000255" key="1">
    <source>
        <dbReference type="HAMAP-Rule" id="MF_00176"/>
    </source>
</evidence>
<protein>
    <recommendedName>
        <fullName evidence="1">Serine--tRNA ligase</fullName>
        <ecNumber evidence="1">6.1.1.11</ecNumber>
    </recommendedName>
    <alternativeName>
        <fullName evidence="1">Seryl-tRNA synthetase</fullName>
        <shortName evidence="1">SerRS</shortName>
    </alternativeName>
    <alternativeName>
        <fullName evidence="1">Seryl-tRNA(Ser/Sec) synthetase</fullName>
    </alternativeName>
</protein>
<keyword id="KW-0030">Aminoacyl-tRNA synthetase</keyword>
<keyword id="KW-0067">ATP-binding</keyword>
<keyword id="KW-0963">Cytoplasm</keyword>
<keyword id="KW-0436">Ligase</keyword>
<keyword id="KW-0547">Nucleotide-binding</keyword>
<keyword id="KW-0648">Protein biosynthesis</keyword>
<keyword id="KW-1185">Reference proteome</keyword>
<name>SYS_NITV2</name>
<sequence length="424" mass="47579">MLDLKLLQKNPEVVAKALAMRHSDIDIATFTTLDTRRRALLTEVESLKSERNKASAEVAKAKRAGEDASALIERLGGVSERIKALDLEAEAVKSEQNDWMLTIPNIPHESVPEGRDENDNVEVLRWGTPRAFSFTPREHWDIGVALGGLDFERAGKLAGSRFTVYWKWAARLERALANYFLDTHISANGYTEVLPPFMVNRKTMTGTGQLPKFEEDLFRLESWDYFLIPTAEVPLTNLHADEILEEGDLPLGYTAQTPCFRSEAGSYGKDTRGLIRQHQFTKVEMVRFAHPERSFDELERMRGHAEALLQNLGLPYRVITLCSGDMGFSATKTYDLEVWLPGQDKYREISSCSNCGDFQARRANIRFRPAGGGKPEFVHTLNGSGLAVGRTLVAVLENYQQEDGSVIVPEVLRPYMGGLERITA</sequence>
<gene>
    <name evidence="1" type="primary">serS</name>
    <name type="ordered locus">DVU_0237</name>
</gene>
<reference key="1">
    <citation type="journal article" date="2004" name="Nat. Biotechnol.">
        <title>The genome sequence of the anaerobic, sulfate-reducing bacterium Desulfovibrio vulgaris Hildenborough.</title>
        <authorList>
            <person name="Heidelberg J.F."/>
            <person name="Seshadri R."/>
            <person name="Haveman S.A."/>
            <person name="Hemme C.L."/>
            <person name="Paulsen I.T."/>
            <person name="Kolonay J.F."/>
            <person name="Eisen J.A."/>
            <person name="Ward N.L."/>
            <person name="Methe B.A."/>
            <person name="Brinkac L.M."/>
            <person name="Daugherty S.C."/>
            <person name="DeBoy R.T."/>
            <person name="Dodson R.J."/>
            <person name="Durkin A.S."/>
            <person name="Madupu R."/>
            <person name="Nelson W.C."/>
            <person name="Sullivan S.A."/>
            <person name="Fouts D.E."/>
            <person name="Haft D.H."/>
            <person name="Selengut J."/>
            <person name="Peterson J.D."/>
            <person name="Davidsen T.M."/>
            <person name="Zafar N."/>
            <person name="Zhou L."/>
            <person name="Radune D."/>
            <person name="Dimitrov G."/>
            <person name="Hance M."/>
            <person name="Tran K."/>
            <person name="Khouri H.M."/>
            <person name="Gill J."/>
            <person name="Utterback T.R."/>
            <person name="Feldblyum T.V."/>
            <person name="Wall J.D."/>
            <person name="Voordouw G."/>
            <person name="Fraser C.M."/>
        </authorList>
    </citation>
    <scope>NUCLEOTIDE SEQUENCE [LARGE SCALE GENOMIC DNA]</scope>
    <source>
        <strain>ATCC 29579 / DSM 644 / CCUG 34227 / NCIMB 8303 / VKM B-1760 / Hildenborough</strain>
    </source>
</reference>
<comment type="function">
    <text evidence="1">Catalyzes the attachment of serine to tRNA(Ser). Is also able to aminoacylate tRNA(Sec) with serine, to form the misacylated tRNA L-seryl-tRNA(Sec), which will be further converted into selenocysteinyl-tRNA(Sec).</text>
</comment>
<comment type="catalytic activity">
    <reaction evidence="1">
        <text>tRNA(Ser) + L-serine + ATP = L-seryl-tRNA(Ser) + AMP + diphosphate + H(+)</text>
        <dbReference type="Rhea" id="RHEA:12292"/>
        <dbReference type="Rhea" id="RHEA-COMP:9669"/>
        <dbReference type="Rhea" id="RHEA-COMP:9703"/>
        <dbReference type="ChEBI" id="CHEBI:15378"/>
        <dbReference type="ChEBI" id="CHEBI:30616"/>
        <dbReference type="ChEBI" id="CHEBI:33019"/>
        <dbReference type="ChEBI" id="CHEBI:33384"/>
        <dbReference type="ChEBI" id="CHEBI:78442"/>
        <dbReference type="ChEBI" id="CHEBI:78533"/>
        <dbReference type="ChEBI" id="CHEBI:456215"/>
        <dbReference type="EC" id="6.1.1.11"/>
    </reaction>
</comment>
<comment type="catalytic activity">
    <reaction evidence="1">
        <text>tRNA(Sec) + L-serine + ATP = L-seryl-tRNA(Sec) + AMP + diphosphate + H(+)</text>
        <dbReference type="Rhea" id="RHEA:42580"/>
        <dbReference type="Rhea" id="RHEA-COMP:9742"/>
        <dbReference type="Rhea" id="RHEA-COMP:10128"/>
        <dbReference type="ChEBI" id="CHEBI:15378"/>
        <dbReference type="ChEBI" id="CHEBI:30616"/>
        <dbReference type="ChEBI" id="CHEBI:33019"/>
        <dbReference type="ChEBI" id="CHEBI:33384"/>
        <dbReference type="ChEBI" id="CHEBI:78442"/>
        <dbReference type="ChEBI" id="CHEBI:78533"/>
        <dbReference type="ChEBI" id="CHEBI:456215"/>
        <dbReference type="EC" id="6.1.1.11"/>
    </reaction>
</comment>
<comment type="pathway">
    <text evidence="1">Aminoacyl-tRNA biosynthesis; selenocysteinyl-tRNA(Sec) biosynthesis; L-seryl-tRNA(Sec) from L-serine and tRNA(Sec): step 1/1.</text>
</comment>
<comment type="subunit">
    <text evidence="1">Homodimer. The tRNA molecule binds across the dimer.</text>
</comment>
<comment type="subcellular location">
    <subcellularLocation>
        <location evidence="1">Cytoplasm</location>
    </subcellularLocation>
</comment>
<comment type="domain">
    <text evidence="1">Consists of two distinct domains, a catalytic core and a N-terminal extension that is involved in tRNA binding.</text>
</comment>
<comment type="similarity">
    <text evidence="1">Belongs to the class-II aminoacyl-tRNA synthetase family. Type-1 seryl-tRNA synthetase subfamily.</text>
</comment>
<organism>
    <name type="scientific">Nitratidesulfovibrio vulgaris (strain ATCC 29579 / DSM 644 / CCUG 34227 / NCIMB 8303 / VKM B-1760 / Hildenborough)</name>
    <name type="common">Desulfovibrio vulgaris</name>
    <dbReference type="NCBI Taxonomy" id="882"/>
    <lineage>
        <taxon>Bacteria</taxon>
        <taxon>Pseudomonadati</taxon>
        <taxon>Thermodesulfobacteriota</taxon>
        <taxon>Desulfovibrionia</taxon>
        <taxon>Desulfovibrionales</taxon>
        <taxon>Desulfovibrionaceae</taxon>
        <taxon>Nitratidesulfovibrio</taxon>
    </lineage>
</organism>